<feature type="chain" id="PRO_0000051968" description="Brain aromatase">
    <location>
        <begin position="1"/>
        <end position="510"/>
    </location>
</feature>
<feature type="binding site" description="axial binding residue" evidence="1">
    <location>
        <position position="435"/>
    </location>
    <ligand>
        <name>heme</name>
        <dbReference type="ChEBI" id="CHEBI:30413"/>
    </ligand>
    <ligandPart>
        <name>Fe</name>
        <dbReference type="ChEBI" id="CHEBI:18248"/>
    </ligandPart>
</feature>
<feature type="sequence conflict" description="In Ref. 2; BAA23757." evidence="3" ref="2">
    <original>A</original>
    <variation>T</variation>
    <location>
        <position position="14"/>
    </location>
</feature>
<feature type="sequence conflict" description="In Ref. 2; BAA23757." evidence="3" ref="2">
    <original>A</original>
    <variation>S</variation>
    <location>
        <position position="495"/>
    </location>
</feature>
<feature type="sequence conflict" description="In Ref. 2; BAA23757." evidence="3" ref="2">
    <original>E</original>
    <variation>Q</variation>
    <location>
        <position position="509"/>
    </location>
</feature>
<organism>
    <name type="scientific">Carassius auratus</name>
    <name type="common">Goldfish</name>
    <dbReference type="NCBI Taxonomy" id="7957"/>
    <lineage>
        <taxon>Eukaryota</taxon>
        <taxon>Metazoa</taxon>
        <taxon>Chordata</taxon>
        <taxon>Craniata</taxon>
        <taxon>Vertebrata</taxon>
        <taxon>Euteleostomi</taxon>
        <taxon>Actinopterygii</taxon>
        <taxon>Neopterygii</taxon>
        <taxon>Teleostei</taxon>
        <taxon>Ostariophysi</taxon>
        <taxon>Cypriniformes</taxon>
        <taxon>Cyprinidae</taxon>
        <taxon>Cyprininae</taxon>
        <taxon>Carassius</taxon>
    </lineage>
</organism>
<comment type="function">
    <text>Catalyzes the formation of aromatic C18 estrogens from C19 androgens.</text>
</comment>
<comment type="catalytic activity">
    <reaction evidence="2">
        <text>testosterone + 3 reduced [NADPH--hemoprotein reductase] + 3 O2 = 17beta-estradiol + formate + 3 oxidized [NADPH--hemoprotein reductase] + 4 H2O + 4 H(+)</text>
        <dbReference type="Rhea" id="RHEA:38191"/>
        <dbReference type="Rhea" id="RHEA-COMP:11964"/>
        <dbReference type="Rhea" id="RHEA-COMP:11965"/>
        <dbReference type="ChEBI" id="CHEBI:15377"/>
        <dbReference type="ChEBI" id="CHEBI:15378"/>
        <dbReference type="ChEBI" id="CHEBI:15379"/>
        <dbReference type="ChEBI" id="CHEBI:15740"/>
        <dbReference type="ChEBI" id="CHEBI:16469"/>
        <dbReference type="ChEBI" id="CHEBI:17347"/>
        <dbReference type="ChEBI" id="CHEBI:57618"/>
        <dbReference type="ChEBI" id="CHEBI:58210"/>
        <dbReference type="EC" id="1.14.14.14"/>
    </reaction>
</comment>
<comment type="catalytic activity">
    <reaction evidence="2">
        <text>androst-4-ene-3,17-dione + 3 reduced [NADPH--hemoprotein reductase] + 3 O2 = estrone + formate + 3 oxidized [NADPH--hemoprotein reductase] + 4 H2O + 4 H(+)</text>
        <dbReference type="Rhea" id="RHEA:38195"/>
        <dbReference type="Rhea" id="RHEA-COMP:11964"/>
        <dbReference type="Rhea" id="RHEA-COMP:11965"/>
        <dbReference type="ChEBI" id="CHEBI:15377"/>
        <dbReference type="ChEBI" id="CHEBI:15378"/>
        <dbReference type="ChEBI" id="CHEBI:15379"/>
        <dbReference type="ChEBI" id="CHEBI:15740"/>
        <dbReference type="ChEBI" id="CHEBI:16422"/>
        <dbReference type="ChEBI" id="CHEBI:17263"/>
        <dbReference type="ChEBI" id="CHEBI:57618"/>
        <dbReference type="ChEBI" id="CHEBI:58210"/>
        <dbReference type="EC" id="1.14.14.14"/>
    </reaction>
</comment>
<comment type="cofactor">
    <cofactor evidence="1">
        <name>heme</name>
        <dbReference type="ChEBI" id="CHEBI:30413"/>
    </cofactor>
</comment>
<comment type="subcellular location">
    <subcellularLocation>
        <location>Membrane</location>
        <topology>Peripheral membrane protein</topology>
    </subcellularLocation>
</comment>
<comment type="tissue specificity">
    <text>Brain specific.</text>
</comment>
<comment type="similarity">
    <text evidence="3">Belongs to the cytochrome P450 family.</text>
</comment>
<protein>
    <recommendedName>
        <fullName>Brain aromatase</fullName>
        <ecNumber evidence="2">1.14.14.14</ecNumber>
    </recommendedName>
    <alternativeName>
        <fullName>CYPXIXA1</fullName>
    </alternativeName>
    <alternativeName>
        <fullName>Cytochrome P-450AROM</fullName>
    </alternativeName>
    <alternativeName>
        <fullName>Cytochrome P450 19 type 1</fullName>
    </alternativeName>
    <alternativeName>
        <fullName>Estrogen synthase</fullName>
    </alternativeName>
</protein>
<reference key="1">
    <citation type="journal article" date="1998" name="Mol. Cell. Endocrinol.">
        <title>Isolation of a goldfish brain cytochrome P450 aromatase cDNA: mRNA expression during the seasonal cycle and after steroid treatment.</title>
        <authorList>
            <person name="Gelinas D.M."/>
            <person name="Pitoc G.A."/>
            <person name="Callard G.V."/>
        </authorList>
    </citation>
    <scope>NUCLEOTIDE SEQUENCE [MRNA]</scope>
    <source>
        <tissue>Brain</tissue>
    </source>
</reference>
<reference key="2">
    <citation type="submission" date="1997-11" db="EMBL/GenBank/DDBJ databases">
        <title>Two differing cDNAs encoding cytochrome P450arom (aromatase) exist in goldfish.</title>
        <authorList>
            <person name="Sudrajat A."/>
            <person name="Yoshiura Y."/>
            <person name="Gen K."/>
            <person name="Suetake H."/>
            <person name="Aida K."/>
        </authorList>
    </citation>
    <scope>NUCLEOTIDE SEQUENCE [MRNA]</scope>
    <source>
        <tissue>Brain</tissue>
    </source>
</reference>
<sequence>MEEVLKGTVNFAAAVQVTLMALTGTLLLILLHRIFTAKNWRNQSGVPGPGWLLGLGPIMSYSRFLWMGIGSACNYYNEKYGSIARVWISGEETFILSKSSAVYHVLKSNNYTGRFASKKGLQCIGMFEQGIIFNSNMALWKKVRTYFTKALTGPGLQKSVDVCVSATNKQLNVLQEFTDHSGHVDVLNLLRCIVVDVSNRLFLRIPLNEKDLLIKIHRYFSTWQAVLIQPDVFFRLNFVYKKYHLAAKELQDEMGKLVEQKRQAINNMEKLDETDFATELIFAQNHDELSVDDVRQCVLEMVIAAPDTLSISLFFMLLLLKQNSVVEEQIVQEIQSQIGERDVESADLQKLNVLERFIKESLRFHPVVDFIMRRALEDDEIDGYRVAKGTNLILNIGRMHKSEFFQKPNEFNLENFENTVPSRYFQPFGCGPRACVGKHIAMVMTKAILVTLLSRFTVCPRHGCTVSTIKQTNNLSMQPVEEDPDSLAMRFIPRAQNICGDPHLGEKTEE</sequence>
<dbReference type="EC" id="1.14.14.14" evidence="2"/>
<dbReference type="EMBL" id="U18974">
    <property type="protein sequence ID" value="AAB39408.1"/>
    <property type="molecule type" value="mRNA"/>
</dbReference>
<dbReference type="EMBL" id="AB009335">
    <property type="protein sequence ID" value="BAA23757.1"/>
    <property type="molecule type" value="mRNA"/>
</dbReference>
<dbReference type="SMR" id="P79690"/>
<dbReference type="Proteomes" id="UP000515129">
    <property type="component" value="Unplaced"/>
</dbReference>
<dbReference type="GO" id="GO:0005783">
    <property type="term" value="C:endoplasmic reticulum"/>
    <property type="evidence" value="ECO:0007669"/>
    <property type="project" value="TreeGrafter"/>
</dbReference>
<dbReference type="GO" id="GO:0016020">
    <property type="term" value="C:membrane"/>
    <property type="evidence" value="ECO:0007669"/>
    <property type="project" value="UniProtKB-SubCell"/>
</dbReference>
<dbReference type="GO" id="GO:0070330">
    <property type="term" value="F:aromatase activity"/>
    <property type="evidence" value="ECO:0007669"/>
    <property type="project" value="UniProtKB-EC"/>
</dbReference>
<dbReference type="GO" id="GO:0020037">
    <property type="term" value="F:heme binding"/>
    <property type="evidence" value="ECO:0007669"/>
    <property type="project" value="InterPro"/>
</dbReference>
<dbReference type="GO" id="GO:0005506">
    <property type="term" value="F:iron ion binding"/>
    <property type="evidence" value="ECO:0007669"/>
    <property type="project" value="InterPro"/>
</dbReference>
<dbReference type="GO" id="GO:0008585">
    <property type="term" value="P:female gonad development"/>
    <property type="evidence" value="ECO:0007669"/>
    <property type="project" value="TreeGrafter"/>
</dbReference>
<dbReference type="GO" id="GO:0006629">
    <property type="term" value="P:lipid metabolic process"/>
    <property type="evidence" value="ECO:0007669"/>
    <property type="project" value="UniProtKB-KW"/>
</dbReference>
<dbReference type="GO" id="GO:0032355">
    <property type="term" value="P:response to estradiol"/>
    <property type="evidence" value="ECO:0007669"/>
    <property type="project" value="TreeGrafter"/>
</dbReference>
<dbReference type="CDD" id="cd20616">
    <property type="entry name" value="CYP19A1"/>
    <property type="match status" value="1"/>
</dbReference>
<dbReference type="FunFam" id="1.10.630.10:FF:000032">
    <property type="entry name" value="Cytochrome P450 aromatase"/>
    <property type="match status" value="1"/>
</dbReference>
<dbReference type="Gene3D" id="1.10.630.10">
    <property type="entry name" value="Cytochrome P450"/>
    <property type="match status" value="1"/>
</dbReference>
<dbReference type="InterPro" id="IPR001128">
    <property type="entry name" value="Cyt_P450"/>
</dbReference>
<dbReference type="InterPro" id="IPR017972">
    <property type="entry name" value="Cyt_P450_CS"/>
</dbReference>
<dbReference type="InterPro" id="IPR002401">
    <property type="entry name" value="Cyt_P450_E_grp-I"/>
</dbReference>
<dbReference type="InterPro" id="IPR036396">
    <property type="entry name" value="Cyt_P450_sf"/>
</dbReference>
<dbReference type="InterPro" id="IPR050196">
    <property type="entry name" value="Cytochrome_P450_Monoox"/>
</dbReference>
<dbReference type="PANTHER" id="PTHR24291">
    <property type="entry name" value="CYTOCHROME P450 FAMILY 4"/>
    <property type="match status" value="1"/>
</dbReference>
<dbReference type="PANTHER" id="PTHR24291:SF199">
    <property type="entry name" value="CYTOCHROME P450, FAMILY 19, SUBFAMILY A, POLYPEPTIDE 1B ISOFORM X1"/>
    <property type="match status" value="1"/>
</dbReference>
<dbReference type="Pfam" id="PF00067">
    <property type="entry name" value="p450"/>
    <property type="match status" value="1"/>
</dbReference>
<dbReference type="PRINTS" id="PR00463">
    <property type="entry name" value="EP450I"/>
</dbReference>
<dbReference type="PRINTS" id="PR00385">
    <property type="entry name" value="P450"/>
</dbReference>
<dbReference type="SUPFAM" id="SSF48264">
    <property type="entry name" value="Cytochrome P450"/>
    <property type="match status" value="1"/>
</dbReference>
<dbReference type="PROSITE" id="PS00086">
    <property type="entry name" value="CYTOCHROME_P450"/>
    <property type="match status" value="1"/>
</dbReference>
<evidence type="ECO:0000250" key="1"/>
<evidence type="ECO:0000250" key="2">
    <source>
        <dbReference type="UniProtKB" id="P11511"/>
    </source>
</evidence>
<evidence type="ECO:0000305" key="3"/>
<gene>
    <name type="primary">cyp19a1</name>
    <name type="synonym">cyp19</name>
</gene>
<accession>P79690</accession>
<accession>O57315</accession>
<proteinExistence type="evidence at transcript level"/>
<name>CP191_CARAU</name>
<keyword id="KW-0349">Heme</keyword>
<keyword id="KW-0408">Iron</keyword>
<keyword id="KW-0443">Lipid metabolism</keyword>
<keyword id="KW-0472">Membrane</keyword>
<keyword id="KW-0479">Metal-binding</keyword>
<keyword id="KW-0503">Monooxygenase</keyword>
<keyword id="KW-0560">Oxidoreductase</keyword>
<keyword id="KW-1185">Reference proteome</keyword>